<proteinExistence type="inferred from homology"/>
<reference key="1">
    <citation type="submission" date="2007-04" db="EMBL/GenBank/DDBJ databases">
        <title>Complete sequence of Roseiflexus sp. RS-1.</title>
        <authorList>
            <consortium name="US DOE Joint Genome Institute"/>
            <person name="Copeland A."/>
            <person name="Lucas S."/>
            <person name="Lapidus A."/>
            <person name="Barry K."/>
            <person name="Detter J.C."/>
            <person name="Glavina del Rio T."/>
            <person name="Hammon N."/>
            <person name="Israni S."/>
            <person name="Dalin E."/>
            <person name="Tice H."/>
            <person name="Pitluck S."/>
            <person name="Chertkov O."/>
            <person name="Brettin T."/>
            <person name="Bruce D."/>
            <person name="Han C."/>
            <person name="Schmutz J."/>
            <person name="Larimer F."/>
            <person name="Land M."/>
            <person name="Hauser L."/>
            <person name="Kyrpides N."/>
            <person name="Mikhailova N."/>
            <person name="Bryant D.A."/>
            <person name="Richardson P."/>
        </authorList>
    </citation>
    <scope>NUCLEOTIDE SEQUENCE [LARGE SCALE GENOMIC DNA]</scope>
    <source>
        <strain>RS-1</strain>
    </source>
</reference>
<feature type="chain" id="PRO_1000088321" description="Beta-ketoacyl-[acyl-carrier-protein] synthase III">
    <location>
        <begin position="1"/>
        <end position="329"/>
    </location>
</feature>
<feature type="region of interest" description="ACP-binding" evidence="1">
    <location>
        <begin position="255"/>
        <end position="259"/>
    </location>
</feature>
<feature type="active site" evidence="1">
    <location>
        <position position="114"/>
    </location>
</feature>
<feature type="active site" evidence="1">
    <location>
        <position position="254"/>
    </location>
</feature>
<feature type="active site" evidence="1">
    <location>
        <position position="284"/>
    </location>
</feature>
<evidence type="ECO:0000255" key="1">
    <source>
        <dbReference type="HAMAP-Rule" id="MF_01815"/>
    </source>
</evidence>
<organism>
    <name type="scientific">Roseiflexus sp. (strain RS-1)</name>
    <dbReference type="NCBI Taxonomy" id="357808"/>
    <lineage>
        <taxon>Bacteria</taxon>
        <taxon>Bacillati</taxon>
        <taxon>Chloroflexota</taxon>
        <taxon>Chloroflexia</taxon>
        <taxon>Chloroflexales</taxon>
        <taxon>Roseiflexineae</taxon>
        <taxon>Roseiflexaceae</taxon>
        <taxon>Roseiflexus</taxon>
    </lineage>
</organism>
<name>FABH_ROSS1</name>
<gene>
    <name evidence="1" type="primary">fabH</name>
    <name type="ordered locus">RoseRS_2614</name>
</gene>
<dbReference type="EC" id="2.3.1.180" evidence="1"/>
<dbReference type="EMBL" id="CP000686">
    <property type="protein sequence ID" value="ABQ90990.1"/>
    <property type="molecule type" value="Genomic_DNA"/>
</dbReference>
<dbReference type="RefSeq" id="WP_011957334.1">
    <property type="nucleotide sequence ID" value="NC_009523.1"/>
</dbReference>
<dbReference type="SMR" id="A5UWI7"/>
<dbReference type="STRING" id="357808.RoseRS_2614"/>
<dbReference type="KEGG" id="rrs:RoseRS_2614"/>
<dbReference type="eggNOG" id="COG0332">
    <property type="taxonomic scope" value="Bacteria"/>
</dbReference>
<dbReference type="HOGENOM" id="CLU_039592_3_1_0"/>
<dbReference type="OrthoDB" id="9815506at2"/>
<dbReference type="UniPathway" id="UPA00094"/>
<dbReference type="Proteomes" id="UP000006554">
    <property type="component" value="Chromosome"/>
</dbReference>
<dbReference type="GO" id="GO:0005737">
    <property type="term" value="C:cytoplasm"/>
    <property type="evidence" value="ECO:0007669"/>
    <property type="project" value="UniProtKB-SubCell"/>
</dbReference>
<dbReference type="GO" id="GO:0004315">
    <property type="term" value="F:3-oxoacyl-[acyl-carrier-protein] synthase activity"/>
    <property type="evidence" value="ECO:0007669"/>
    <property type="project" value="InterPro"/>
</dbReference>
<dbReference type="GO" id="GO:0033818">
    <property type="term" value="F:beta-ketoacyl-acyl-carrier-protein synthase III activity"/>
    <property type="evidence" value="ECO:0007669"/>
    <property type="project" value="UniProtKB-UniRule"/>
</dbReference>
<dbReference type="GO" id="GO:0006633">
    <property type="term" value="P:fatty acid biosynthetic process"/>
    <property type="evidence" value="ECO:0007669"/>
    <property type="project" value="UniProtKB-UniRule"/>
</dbReference>
<dbReference type="GO" id="GO:0044550">
    <property type="term" value="P:secondary metabolite biosynthetic process"/>
    <property type="evidence" value="ECO:0007669"/>
    <property type="project" value="TreeGrafter"/>
</dbReference>
<dbReference type="CDD" id="cd00830">
    <property type="entry name" value="KAS_III"/>
    <property type="match status" value="1"/>
</dbReference>
<dbReference type="FunFam" id="3.40.47.10:FF:000004">
    <property type="entry name" value="3-oxoacyl-[acyl-carrier-protein] synthase 3"/>
    <property type="match status" value="1"/>
</dbReference>
<dbReference type="Gene3D" id="3.40.47.10">
    <property type="match status" value="1"/>
</dbReference>
<dbReference type="HAMAP" id="MF_01815">
    <property type="entry name" value="FabH"/>
    <property type="match status" value="1"/>
</dbReference>
<dbReference type="InterPro" id="IPR013747">
    <property type="entry name" value="ACP_syn_III_C"/>
</dbReference>
<dbReference type="InterPro" id="IPR013751">
    <property type="entry name" value="ACP_syn_III_N"/>
</dbReference>
<dbReference type="InterPro" id="IPR004655">
    <property type="entry name" value="FabH"/>
</dbReference>
<dbReference type="InterPro" id="IPR016039">
    <property type="entry name" value="Thiolase-like"/>
</dbReference>
<dbReference type="NCBIfam" id="TIGR00747">
    <property type="entry name" value="fabH"/>
    <property type="match status" value="1"/>
</dbReference>
<dbReference type="NCBIfam" id="NF006829">
    <property type="entry name" value="PRK09352.1"/>
    <property type="match status" value="1"/>
</dbReference>
<dbReference type="PANTHER" id="PTHR34069">
    <property type="entry name" value="3-OXOACYL-[ACYL-CARRIER-PROTEIN] SYNTHASE 3"/>
    <property type="match status" value="1"/>
</dbReference>
<dbReference type="PANTHER" id="PTHR34069:SF2">
    <property type="entry name" value="BETA-KETOACYL-[ACYL-CARRIER-PROTEIN] SYNTHASE III"/>
    <property type="match status" value="1"/>
</dbReference>
<dbReference type="Pfam" id="PF08545">
    <property type="entry name" value="ACP_syn_III"/>
    <property type="match status" value="1"/>
</dbReference>
<dbReference type="Pfam" id="PF08541">
    <property type="entry name" value="ACP_syn_III_C"/>
    <property type="match status" value="1"/>
</dbReference>
<dbReference type="SUPFAM" id="SSF53901">
    <property type="entry name" value="Thiolase-like"/>
    <property type="match status" value="1"/>
</dbReference>
<accession>A5UWI7</accession>
<sequence length="329" mass="35186">MANYAAMTGWGMAVPERVLTNADLERIVETSDEWIQTRTGIRERRVAGPGEYTSTLSIAAGRAALERAGLDAAQIDTVILATCTPDRPFPATACTIQAGIGARRAAAFDLVAACSGFVYGLNVATSMIRSGAARNVLFVACDIFTHFINWNDRNTCVLFGDGAGAVVLQPSDEPAGLISCVLGADGEQEDLMAVDAGGTRLPATPELLEQGRQYVYMNGREIFKHAVREMAASSLEAIRVAGLSPDDIALVVPHQANLRIIEATARRLEVPMERVFVNLDRYGNTSAASVPIALVEAVEQQRLRKGDYALLTAFGGGLTWASAVIRWTA</sequence>
<comment type="function">
    <text evidence="1">Catalyzes the condensation reaction of fatty acid synthesis by the addition to an acyl acceptor of two carbons from malonyl-ACP. Catalyzes the first condensation reaction which initiates fatty acid synthesis and may therefore play a role in governing the total rate of fatty acid production. Possesses both acetoacetyl-ACP synthase and acetyl transacylase activities. Its substrate specificity determines the biosynthesis of branched-chain and/or straight-chain of fatty acids.</text>
</comment>
<comment type="catalytic activity">
    <reaction evidence="1">
        <text>malonyl-[ACP] + acetyl-CoA + H(+) = 3-oxobutanoyl-[ACP] + CO2 + CoA</text>
        <dbReference type="Rhea" id="RHEA:12080"/>
        <dbReference type="Rhea" id="RHEA-COMP:9623"/>
        <dbReference type="Rhea" id="RHEA-COMP:9625"/>
        <dbReference type="ChEBI" id="CHEBI:15378"/>
        <dbReference type="ChEBI" id="CHEBI:16526"/>
        <dbReference type="ChEBI" id="CHEBI:57287"/>
        <dbReference type="ChEBI" id="CHEBI:57288"/>
        <dbReference type="ChEBI" id="CHEBI:78449"/>
        <dbReference type="ChEBI" id="CHEBI:78450"/>
        <dbReference type="EC" id="2.3.1.180"/>
    </reaction>
</comment>
<comment type="pathway">
    <text evidence="1">Lipid metabolism; fatty acid biosynthesis.</text>
</comment>
<comment type="subunit">
    <text evidence="1">Homodimer.</text>
</comment>
<comment type="subcellular location">
    <subcellularLocation>
        <location evidence="1">Cytoplasm</location>
    </subcellularLocation>
</comment>
<comment type="domain">
    <text evidence="1">The last Arg residue of the ACP-binding site is essential for the weak association between ACP/AcpP and FabH.</text>
</comment>
<comment type="similarity">
    <text evidence="1">Belongs to the thiolase-like superfamily. FabH family.</text>
</comment>
<protein>
    <recommendedName>
        <fullName evidence="1">Beta-ketoacyl-[acyl-carrier-protein] synthase III</fullName>
        <shortName evidence="1">Beta-ketoacyl-ACP synthase III</shortName>
        <shortName evidence="1">KAS III</shortName>
        <ecNumber evidence="1">2.3.1.180</ecNumber>
    </recommendedName>
    <alternativeName>
        <fullName evidence="1">3-oxoacyl-[acyl-carrier-protein] synthase 3</fullName>
    </alternativeName>
    <alternativeName>
        <fullName evidence="1">3-oxoacyl-[acyl-carrier-protein] synthase III</fullName>
    </alternativeName>
</protein>
<keyword id="KW-0012">Acyltransferase</keyword>
<keyword id="KW-0963">Cytoplasm</keyword>
<keyword id="KW-0275">Fatty acid biosynthesis</keyword>
<keyword id="KW-0276">Fatty acid metabolism</keyword>
<keyword id="KW-0444">Lipid biosynthesis</keyword>
<keyword id="KW-0443">Lipid metabolism</keyword>
<keyword id="KW-0511">Multifunctional enzyme</keyword>
<keyword id="KW-0808">Transferase</keyword>